<proteinExistence type="evidence at protein level"/>
<name>ARC_MYCS2</name>
<feature type="chain" id="PRO_0000396999" description="Proteasome-associated ATPase">
    <location>
        <begin position="1"/>
        <end position="613"/>
    </location>
</feature>
<feature type="region of interest" description="Disordered" evidence="2">
    <location>
        <begin position="1"/>
        <end position="29"/>
    </location>
</feature>
<feature type="region of interest" description="Docks into pockets in the proteasome alpha-ring" evidence="1">
    <location>
        <begin position="612"/>
        <end position="613"/>
    </location>
</feature>
<feature type="coiled-coil region" evidence="1">
    <location>
        <begin position="23"/>
        <end position="100"/>
    </location>
</feature>
<feature type="binding site" evidence="1">
    <location>
        <begin position="300"/>
        <end position="305"/>
    </location>
    <ligand>
        <name>ATP</name>
        <dbReference type="ChEBI" id="CHEBI:30616"/>
    </ligand>
</feature>
<feature type="cross-link" description="Isoglutamyl lysine isopeptide (Lys-Gln) (interchain with Q-Cter in protein Pup)" evidence="3">
    <location>
        <position position="595"/>
    </location>
</feature>
<protein>
    <recommendedName>
        <fullName evidence="1">Proteasome-associated ATPase</fullName>
    </recommendedName>
    <alternativeName>
        <fullName evidence="1">AAA ATPase forming ring-shaped complexes</fullName>
        <shortName evidence="1">ARC</shortName>
    </alternativeName>
    <alternativeName>
        <fullName evidence="1">Mycobacterial proteasome ATPase</fullName>
    </alternativeName>
</protein>
<gene>
    <name evidence="1" type="primary">mpa</name>
    <name type="ordered locus">MSMEG_3902</name>
    <name type="ordered locus">MSMEI_3813</name>
</gene>
<sequence>MSESERSEGFPEGFAGAGSGSLSSEDAAELEALRREAAMLREQLENAVGPQSGLRSARDVHQLEARIDSLAARNAKLMDTLKEARQQLLALREEVDRLGQPPSGYGVLLATHDDDTVDVFTSGRKMRLTCSPNIEVKELKQGQTVRLNEALTVVEAGNFEAVGEISTLREILADGHRALVVGHADEERIVWLAEPLVAAKDLPDEPTDYFDDSRPRKLRPGDSLLVDTKAGYAFERIPKAEVEDLVLEEVPDVSYNDIGGLGRQIEQIRDAVELPFLHKDLYKEYSLRPPKGVLLYGPPGCGKTLIAKAVANSLAKKMAEVRGDDAREAKSYFLNIKGPELLNKFVGETERHIRLIFQRAREKASEGTPVIVFFDEMDSIFRTRGTGVSSDVETTVVPQLLSEIDGVEGLENVIVIGASNREDMIDPAILRPGRLDVKIKIERPDAEAAQDIFSKYLTEDLPVHADDLTEFNGDRALCIKAMIEKVVDRMYAEIDDNRFLEVTYANGDKEVMYFKDFNSGAMIQNVVDRAKKYAIKSVLETGQKGLRIQHLLDSIVDEFAENEDLPNTTNPDDWARISGKKGERIVYIRTLVTGKSSSASRAIDTESNLGQYL</sequence>
<evidence type="ECO:0000255" key="1">
    <source>
        <dbReference type="HAMAP-Rule" id="MF_02112"/>
    </source>
</evidence>
<evidence type="ECO:0000256" key="2">
    <source>
        <dbReference type="SAM" id="MobiDB-lite"/>
    </source>
</evidence>
<evidence type="ECO:0000269" key="3">
    <source>
    </source>
</evidence>
<organism>
    <name type="scientific">Mycolicibacterium smegmatis (strain ATCC 700084 / mc(2)155)</name>
    <name type="common">Mycobacterium smegmatis</name>
    <dbReference type="NCBI Taxonomy" id="246196"/>
    <lineage>
        <taxon>Bacteria</taxon>
        <taxon>Bacillati</taxon>
        <taxon>Actinomycetota</taxon>
        <taxon>Actinomycetes</taxon>
        <taxon>Mycobacteriales</taxon>
        <taxon>Mycobacteriaceae</taxon>
        <taxon>Mycolicibacterium</taxon>
    </lineage>
</organism>
<comment type="function">
    <text evidence="1">ATPase which is responsible for recognizing, binding, unfolding and translocation of pupylated proteins into the bacterial 20S proteasome core particle. May be essential for opening the gate of the 20S proteasome via an interaction with its C-terminus, thereby allowing substrate entry and access to the site of proteolysis. Thus, the C-termini of the proteasomal ATPase may function like a 'key in a lock' to induce gate opening and therefore regulate proteolysis.</text>
</comment>
<comment type="pathway">
    <text evidence="1">Protein degradation; proteasomal Pup-dependent pathway.</text>
</comment>
<comment type="subunit">
    <text evidence="1">Homohexamer. Assembles into a hexameric ring structure that caps the 20S proteasome core. Strongly interacts with the prokaryotic ubiquitin-like protein Pup through a hydrophobic interface; the interacting region of ARC lies in its N-terminal coiled-coil domain. There is one Pup binding site per ARC hexamer ring. Upon ATP-binding, the C-terminus of ARC interacts with the alpha-rings of the proteasome core, possibly by binding to the intersubunit pockets.</text>
</comment>
<comment type="domain">
    <text evidence="1">Consists of three main regions, an N-terminal coiled-coil domain that binds to protein Pup and functions as a docking station, an interdomain involved in ARC hexamerization, and a C-terminal ATPase domain of the AAA type.</text>
</comment>
<comment type="similarity">
    <text evidence="1">Belongs to the AAA ATPase family.</text>
</comment>
<reference key="1">
    <citation type="submission" date="2006-10" db="EMBL/GenBank/DDBJ databases">
        <authorList>
            <person name="Fleischmann R.D."/>
            <person name="Dodson R.J."/>
            <person name="Haft D.H."/>
            <person name="Merkel J.S."/>
            <person name="Nelson W.C."/>
            <person name="Fraser C.M."/>
        </authorList>
    </citation>
    <scope>NUCLEOTIDE SEQUENCE [LARGE SCALE GENOMIC DNA]</scope>
    <source>
        <strain>ATCC 700084 / mc(2)155</strain>
    </source>
</reference>
<reference key="2">
    <citation type="journal article" date="2007" name="Genome Biol.">
        <title>Interrupted coding sequences in Mycobacterium smegmatis: authentic mutations or sequencing errors?</title>
        <authorList>
            <person name="Deshayes C."/>
            <person name="Perrodou E."/>
            <person name="Gallien S."/>
            <person name="Euphrasie D."/>
            <person name="Schaeffer C."/>
            <person name="Van-Dorsselaer A."/>
            <person name="Poch O."/>
            <person name="Lecompte O."/>
            <person name="Reyrat J.-M."/>
        </authorList>
    </citation>
    <scope>NUCLEOTIDE SEQUENCE [LARGE SCALE GENOMIC DNA]</scope>
    <source>
        <strain>ATCC 700084 / mc(2)155</strain>
    </source>
</reference>
<reference key="3">
    <citation type="journal article" date="2009" name="Genome Res.">
        <title>Ortho-proteogenomics: multiple proteomes investigation through orthology and a new MS-based protocol.</title>
        <authorList>
            <person name="Gallien S."/>
            <person name="Perrodou E."/>
            <person name="Carapito C."/>
            <person name="Deshayes C."/>
            <person name="Reyrat J.-M."/>
            <person name="Van Dorsselaer A."/>
            <person name="Poch O."/>
            <person name="Schaeffer C."/>
            <person name="Lecompte O."/>
        </authorList>
    </citation>
    <scope>NUCLEOTIDE SEQUENCE [LARGE SCALE GENOMIC DNA]</scope>
    <source>
        <strain>ATCC 700084 / mc(2)155</strain>
    </source>
</reference>
<reference key="4">
    <citation type="journal article" date="2010" name="Mol. Biosyst.">
        <title>Expansion of the mycobacterial 'PUPylome'.</title>
        <authorList>
            <person name="Watrous J."/>
            <person name="Burns K."/>
            <person name="Liu W.T."/>
            <person name="Patel A."/>
            <person name="Hook V."/>
            <person name="Bafna V."/>
            <person name="Barry C.E. III"/>
            <person name="Bark S."/>
            <person name="Dorrestein P.C."/>
        </authorList>
    </citation>
    <scope>PUPYLATION AT LYS-595</scope>
    <scope>IDENTIFICATION BY MASS SPECTROMETRY</scope>
</reference>
<accession>A0QZ54</accession>
<accession>I7GAT7</accession>
<dbReference type="EMBL" id="CP000480">
    <property type="protein sequence ID" value="ABK72984.1"/>
    <property type="molecule type" value="Genomic_DNA"/>
</dbReference>
<dbReference type="EMBL" id="CP001663">
    <property type="protein sequence ID" value="AFP40271.1"/>
    <property type="molecule type" value="Genomic_DNA"/>
</dbReference>
<dbReference type="RefSeq" id="YP_888192.1">
    <property type="nucleotide sequence ID" value="NC_008596.1"/>
</dbReference>
<dbReference type="SMR" id="A0QZ54"/>
<dbReference type="STRING" id="246196.MSMEG_3902"/>
<dbReference type="PaxDb" id="246196-MSMEI_3813"/>
<dbReference type="KEGG" id="msb:LJ00_19390"/>
<dbReference type="KEGG" id="msg:MSMEI_3813"/>
<dbReference type="KEGG" id="msm:MSMEG_3902"/>
<dbReference type="PATRIC" id="fig|246196.19.peg.3842"/>
<dbReference type="eggNOG" id="COG1222">
    <property type="taxonomic scope" value="Bacteria"/>
</dbReference>
<dbReference type="OrthoDB" id="9809379at2"/>
<dbReference type="UniPathway" id="UPA00997"/>
<dbReference type="Proteomes" id="UP000000757">
    <property type="component" value="Chromosome"/>
</dbReference>
<dbReference type="Proteomes" id="UP000006158">
    <property type="component" value="Chromosome"/>
</dbReference>
<dbReference type="GO" id="GO:0000502">
    <property type="term" value="C:proteasome complex"/>
    <property type="evidence" value="ECO:0007669"/>
    <property type="project" value="UniProtKB-KW"/>
</dbReference>
<dbReference type="GO" id="GO:0005524">
    <property type="term" value="F:ATP binding"/>
    <property type="evidence" value="ECO:0007669"/>
    <property type="project" value="UniProtKB-UniRule"/>
</dbReference>
<dbReference type="GO" id="GO:0016887">
    <property type="term" value="F:ATP hydrolysis activity"/>
    <property type="evidence" value="ECO:0007669"/>
    <property type="project" value="UniProtKB-UniRule"/>
</dbReference>
<dbReference type="GO" id="GO:0019941">
    <property type="term" value="P:modification-dependent protein catabolic process"/>
    <property type="evidence" value="ECO:0007669"/>
    <property type="project" value="InterPro"/>
</dbReference>
<dbReference type="GO" id="GO:0010498">
    <property type="term" value="P:proteasomal protein catabolic process"/>
    <property type="evidence" value="ECO:0007669"/>
    <property type="project" value="InterPro"/>
</dbReference>
<dbReference type="FunFam" id="1.20.5.170:FF:000018">
    <property type="entry name" value="AAA ATPase forming ring-shaped complexes"/>
    <property type="match status" value="1"/>
</dbReference>
<dbReference type="FunFam" id="2.40.50.140:FF:000169">
    <property type="entry name" value="AAA ATPase forming ring-shaped complexes"/>
    <property type="match status" value="1"/>
</dbReference>
<dbReference type="FunFam" id="3.40.50.300:FF:000155">
    <property type="entry name" value="AAA ATPase forming ring-shaped complexes"/>
    <property type="match status" value="1"/>
</dbReference>
<dbReference type="Gene3D" id="1.10.8.60">
    <property type="match status" value="1"/>
</dbReference>
<dbReference type="Gene3D" id="1.20.5.170">
    <property type="match status" value="1"/>
</dbReference>
<dbReference type="Gene3D" id="2.40.50.140">
    <property type="entry name" value="Nucleic acid-binding proteins"/>
    <property type="match status" value="2"/>
</dbReference>
<dbReference type="Gene3D" id="3.40.50.300">
    <property type="entry name" value="P-loop containing nucleotide triphosphate hydrolases"/>
    <property type="match status" value="1"/>
</dbReference>
<dbReference type="HAMAP" id="MF_02112">
    <property type="entry name" value="ARC_ATPase"/>
    <property type="match status" value="1"/>
</dbReference>
<dbReference type="InterPro" id="IPR003593">
    <property type="entry name" value="AAA+_ATPase"/>
</dbReference>
<dbReference type="InterPro" id="IPR050168">
    <property type="entry name" value="AAA_ATPase_domain"/>
</dbReference>
<dbReference type="InterPro" id="IPR003959">
    <property type="entry name" value="ATPase_AAA_core"/>
</dbReference>
<dbReference type="InterPro" id="IPR003960">
    <property type="entry name" value="ATPase_AAA_CS"/>
</dbReference>
<dbReference type="InterPro" id="IPR012340">
    <property type="entry name" value="NA-bd_OB-fold"/>
</dbReference>
<dbReference type="InterPro" id="IPR027417">
    <property type="entry name" value="P-loop_NTPase"/>
</dbReference>
<dbReference type="InterPro" id="IPR032501">
    <property type="entry name" value="Prot_ATP_ID_OB_2nd"/>
</dbReference>
<dbReference type="InterPro" id="IPR041626">
    <property type="entry name" value="Prot_ATP_ID_OB_N"/>
</dbReference>
<dbReference type="InterPro" id="IPR022482">
    <property type="entry name" value="Proteasome_ATPase"/>
</dbReference>
<dbReference type="NCBIfam" id="TIGR03689">
    <property type="entry name" value="pup_AAA"/>
    <property type="match status" value="1"/>
</dbReference>
<dbReference type="PANTHER" id="PTHR23077">
    <property type="entry name" value="AAA-FAMILY ATPASE"/>
    <property type="match status" value="1"/>
</dbReference>
<dbReference type="PANTHER" id="PTHR23077:SF144">
    <property type="entry name" value="PROTEASOME-ASSOCIATED ATPASE"/>
    <property type="match status" value="1"/>
</dbReference>
<dbReference type="Pfam" id="PF00004">
    <property type="entry name" value="AAA"/>
    <property type="match status" value="1"/>
</dbReference>
<dbReference type="Pfam" id="PF16450">
    <property type="entry name" value="Prot_ATP_ID_OB_C"/>
    <property type="match status" value="1"/>
</dbReference>
<dbReference type="Pfam" id="PF17758">
    <property type="entry name" value="Prot_ATP_ID_OB_N"/>
    <property type="match status" value="1"/>
</dbReference>
<dbReference type="SMART" id="SM00382">
    <property type="entry name" value="AAA"/>
    <property type="match status" value="1"/>
</dbReference>
<dbReference type="SUPFAM" id="SSF52540">
    <property type="entry name" value="P-loop containing nucleoside triphosphate hydrolases"/>
    <property type="match status" value="1"/>
</dbReference>
<dbReference type="PROSITE" id="PS00674">
    <property type="entry name" value="AAA"/>
    <property type="match status" value="1"/>
</dbReference>
<keyword id="KW-0067">ATP-binding</keyword>
<keyword id="KW-0143">Chaperone</keyword>
<keyword id="KW-0175">Coiled coil</keyword>
<keyword id="KW-1017">Isopeptide bond</keyword>
<keyword id="KW-0547">Nucleotide-binding</keyword>
<keyword id="KW-0647">Proteasome</keyword>
<keyword id="KW-1185">Reference proteome</keyword>
<keyword id="KW-0832">Ubl conjugation</keyword>